<evidence type="ECO:0000250" key="1">
    <source>
        <dbReference type="UniProtKB" id="Q925S4"/>
    </source>
</evidence>
<evidence type="ECO:0000255" key="2"/>
<evidence type="ECO:0000269" key="3">
    <source>
    </source>
</evidence>
<evidence type="ECO:0000269" key="4">
    <source>
    </source>
</evidence>
<evidence type="ECO:0000269" key="5">
    <source>
    </source>
</evidence>
<evidence type="ECO:0000269" key="6">
    <source>
    </source>
</evidence>
<evidence type="ECO:0000269" key="7">
    <source>
    </source>
</evidence>
<evidence type="ECO:0000269" key="8">
    <source>
    </source>
</evidence>
<evidence type="ECO:0000269" key="9">
    <source>
    </source>
</evidence>
<evidence type="ECO:0000269" key="10">
    <source ref="5"/>
</evidence>
<evidence type="ECO:0000303" key="11">
    <source>
    </source>
</evidence>
<evidence type="ECO:0000303" key="12">
    <source>
    </source>
</evidence>
<evidence type="ECO:0000303" key="13">
    <source>
    </source>
</evidence>
<evidence type="ECO:0000303" key="14">
    <source ref="7"/>
</evidence>
<evidence type="ECO:0000305" key="15"/>
<evidence type="ECO:0007744" key="16">
    <source>
        <dbReference type="PDB" id="6DF3"/>
    </source>
</evidence>
<evidence type="ECO:0007829" key="17">
    <source>
        <dbReference type="PDB" id="6DF3"/>
    </source>
</evidence>
<evidence type="ECO:0007829" key="18">
    <source>
        <dbReference type="PDB" id="6GG1"/>
    </source>
</evidence>
<protein>
    <recommendedName>
        <fullName>Interleukin-24</fullName>
        <shortName>IL-24</shortName>
    </recommendedName>
    <alternativeName>
        <fullName>Melanoma differentiation-associated gene 7 protein</fullName>
        <shortName>MDA-7</shortName>
    </alternativeName>
    <alternativeName>
        <fullName>Suppression of tumorigenicity 16 protein</fullName>
    </alternativeName>
</protein>
<feature type="signal peptide" evidence="5">
    <location>
        <begin position="1"/>
        <end position="51"/>
    </location>
</feature>
<feature type="chain" id="PRO_0000015386" description="Interleukin-24">
    <location>
        <begin position="52"/>
        <end position="206"/>
    </location>
</feature>
<feature type="glycosylation site" description="N-linked (GlcNAc...) asparagine" evidence="2">
    <location>
        <position position="85"/>
    </location>
</feature>
<feature type="glycosylation site" description="N-linked (GlcNAc...) asparagine" evidence="2">
    <location>
        <position position="99"/>
    </location>
</feature>
<feature type="glycosylation site" description="N-linked (GlcNAc...) asparagine" evidence="2">
    <location>
        <position position="126"/>
    </location>
</feature>
<feature type="disulfide bond" evidence="9 16">
    <location>
        <begin position="59"/>
        <end position="106"/>
    </location>
</feature>
<feature type="cross-link" description="Glycyl lysine isopeptide (Lys-Gly) (interchain with G-Cter in ubiquitin)" evidence="6">
    <location>
        <position position="122"/>
    </location>
</feature>
<feature type="splice variant" id="VSP_042673" description="In isoform 2 and isoform 3." evidence="12 13 14">
    <original>A</original>
    <variation>AS</variation>
    <location>
        <position position="14"/>
    </location>
</feature>
<feature type="splice variant" id="VSP_043915" description="In isoform 4." evidence="11">
    <original>RPFCPPLLATASQMQMVVLPCLGFTLLLWSQVSGAQGQEFHFGPCQVKGVVPQKLWEAFWAVKDTMQAQDNITSARLLQQEVLQNVSDAESCYLVHTLLEFYLKTVFKNYHNRTVEVRTLKSFSTLANNFVLIVSQLQPSQENEMFSIRDSAHRRFLLFRRAFKQLDVEAALTKALGEVDILLTWMQKFYKL</original>
    <variation>SKLRITSRVPGCCSRRFCRTSRKKMRCFPSETVHTGGFCYSGEHSNSWT</variation>
    <location>
        <begin position="15"/>
        <end position="206"/>
    </location>
</feature>
<feature type="splice variant" id="VSP_042674" description="In isoform 3." evidence="13">
    <location>
        <begin position="101"/>
        <end position="153"/>
    </location>
</feature>
<feature type="sequence variant" id="VAR_011974" description="In dbSNP:rs1150258." evidence="3 10">
    <original>Y</original>
    <variation>H</variation>
    <location>
        <position position="124"/>
    </location>
</feature>
<feature type="sequence variant" id="VAR_013097" description="In dbSNP:rs3093431." evidence="10">
    <original>H</original>
    <variation>R</variation>
    <location>
        <position position="125"/>
    </location>
</feature>
<feature type="sequence variant" id="VAR_013098" description="In dbSNP:rs3093446." evidence="10">
    <original>V</original>
    <variation>L</variation>
    <location>
        <position position="131"/>
    </location>
</feature>
<feature type="strand" evidence="18">
    <location>
        <begin position="54"/>
        <end position="56"/>
    </location>
</feature>
<feature type="strand" evidence="18">
    <location>
        <begin position="59"/>
        <end position="61"/>
    </location>
</feature>
<feature type="helix" evidence="18">
    <location>
        <begin position="66"/>
        <end position="77"/>
    </location>
</feature>
<feature type="helix" evidence="18">
    <location>
        <begin position="94"/>
        <end position="98"/>
    </location>
</feature>
<feature type="helix" evidence="18">
    <location>
        <begin position="102"/>
        <end position="118"/>
    </location>
</feature>
<feature type="helix" evidence="18">
    <location>
        <begin position="120"/>
        <end position="123"/>
    </location>
</feature>
<feature type="helix" evidence="18">
    <location>
        <begin position="125"/>
        <end position="128"/>
    </location>
</feature>
<feature type="helix" evidence="18">
    <location>
        <begin position="131"/>
        <end position="156"/>
    </location>
</feature>
<feature type="helix" evidence="17">
    <location>
        <begin position="157"/>
        <end position="159"/>
    </location>
</feature>
<feature type="helix" evidence="18">
    <location>
        <begin position="164"/>
        <end position="178"/>
    </location>
</feature>
<feature type="helix" evidence="18">
    <location>
        <begin position="182"/>
        <end position="191"/>
    </location>
</feature>
<feature type="helix" evidence="18">
    <location>
        <begin position="193"/>
        <end position="200"/>
    </location>
</feature>
<feature type="helix" evidence="18">
    <location>
        <begin position="201"/>
        <end position="203"/>
    </location>
</feature>
<sequence>MNFQQRLQSLWTLARPFCPPLLATASQMQMVVLPCLGFTLLLWSQVSGAQGQEFHFGPCQVKGVVPQKLWEAFWAVKDTMQAQDNITSARLLQQEVLQNVSDAESCYLVHTLLEFYLKTVFKNYHNRTVEVRTLKSFSTLANNFVLIVSQLQPSQENEMFSIRDSAHRRFLLFRRAFKQLDVEAALTKALGEVDILLTWMQKFYKL</sequence>
<keyword id="KW-0002">3D-structure</keyword>
<keyword id="KW-0025">Alternative splicing</keyword>
<keyword id="KW-0053">Apoptosis</keyword>
<keyword id="KW-0202">Cytokine</keyword>
<keyword id="KW-0903">Direct protein sequencing</keyword>
<keyword id="KW-1015">Disulfide bond</keyword>
<keyword id="KW-0325">Glycoprotein</keyword>
<keyword id="KW-1017">Isopeptide bond</keyword>
<keyword id="KW-1267">Proteomics identification</keyword>
<keyword id="KW-1185">Reference proteome</keyword>
<keyword id="KW-0964">Secreted</keyword>
<keyword id="KW-0732">Signal</keyword>
<keyword id="KW-0832">Ubl conjugation</keyword>
<dbReference type="EMBL" id="U16261">
    <property type="protein sequence ID" value="AAA91780.1"/>
    <property type="molecule type" value="mRNA"/>
</dbReference>
<dbReference type="EMBL" id="AF276916">
    <property type="protein sequence ID" value="AAG41401.1"/>
    <property type="molecule type" value="Genomic_DNA"/>
</dbReference>
<dbReference type="EMBL" id="AF235005">
    <property type="protein sequence ID" value="AAK52589.1"/>
    <property type="molecule type" value="Genomic_DNA"/>
</dbReference>
<dbReference type="EMBL" id="AY237723">
    <property type="protein sequence ID" value="AAO67513.1"/>
    <property type="molecule type" value="mRNA"/>
</dbReference>
<dbReference type="EMBL" id="AY062931">
    <property type="protein sequence ID" value="AAL34146.1"/>
    <property type="molecule type" value="Genomic_DNA"/>
</dbReference>
<dbReference type="EMBL" id="AY641441">
    <property type="protein sequence ID" value="AAV52801.1"/>
    <property type="molecule type" value="mRNA"/>
</dbReference>
<dbReference type="EMBL" id="BT007156">
    <property type="protein sequence ID" value="AAP35820.1"/>
    <property type="molecule type" value="mRNA"/>
</dbReference>
<dbReference type="EMBL" id="AC098935">
    <property type="status" value="NOT_ANNOTATED_CDS"/>
    <property type="molecule type" value="Genomic_DNA"/>
</dbReference>
<dbReference type="EMBL" id="BC009681">
    <property type="protein sequence ID" value="AAH09681.1"/>
    <property type="molecule type" value="mRNA"/>
</dbReference>
<dbReference type="CCDS" id="CCDS1471.1">
    <molecule id="Q13007-1"/>
</dbReference>
<dbReference type="CCDS" id="CCDS53465.1">
    <molecule id="Q13007-2"/>
</dbReference>
<dbReference type="CCDS" id="CCDS53466.1">
    <molecule id="Q13007-3"/>
</dbReference>
<dbReference type="CCDS" id="CCDS73021.1">
    <molecule id="Q13007-4"/>
</dbReference>
<dbReference type="RefSeq" id="NP_001172085.1">
    <molecule id="Q13007-2"/>
    <property type="nucleotide sequence ID" value="NM_001185156.1"/>
</dbReference>
<dbReference type="RefSeq" id="NP_001172086.1">
    <molecule id="Q13007-3"/>
    <property type="nucleotide sequence ID" value="NM_001185157.1"/>
</dbReference>
<dbReference type="RefSeq" id="NP_001172087.1">
    <molecule id="Q13007-4"/>
    <property type="nucleotide sequence ID" value="NM_001185158.1"/>
</dbReference>
<dbReference type="RefSeq" id="NP_006841.1">
    <molecule id="Q13007-1"/>
    <property type="nucleotide sequence ID" value="NM_006850.3"/>
</dbReference>
<dbReference type="RefSeq" id="XP_047297719.1">
    <molecule id="Q13007-2"/>
    <property type="nucleotide sequence ID" value="XM_047441763.1"/>
</dbReference>
<dbReference type="RefSeq" id="XP_047297730.1">
    <molecule id="Q13007-1"/>
    <property type="nucleotide sequence ID" value="XM_047441774.1"/>
</dbReference>
<dbReference type="RefSeq" id="XP_054189934.1">
    <molecule id="Q13007-2"/>
    <property type="nucleotide sequence ID" value="XM_054333959.1"/>
</dbReference>
<dbReference type="PDB" id="6DF3">
    <property type="method" value="X-ray"/>
    <property type="resolution" value="2.15 A"/>
    <property type="chains" value="C=52-206"/>
</dbReference>
<dbReference type="PDB" id="6GG1">
    <property type="method" value="X-ray"/>
    <property type="resolution" value="1.30 A"/>
    <property type="chains" value="A=54-206"/>
</dbReference>
<dbReference type="PDBsum" id="6DF3"/>
<dbReference type="PDBsum" id="6GG1"/>
<dbReference type="SMR" id="Q13007"/>
<dbReference type="BioGRID" id="116199">
    <property type="interactions" value="33"/>
</dbReference>
<dbReference type="ComplexPortal" id="CPX-10310">
    <property type="entry name" value="Interleukin-24 receptor-ligand complex, type 1"/>
</dbReference>
<dbReference type="ComplexPortal" id="CPX-10311">
    <property type="entry name" value="Interleukin-24 receptor-ligand complex, type 2"/>
</dbReference>
<dbReference type="FunCoup" id="Q13007">
    <property type="interactions" value="509"/>
</dbReference>
<dbReference type="IntAct" id="Q13007">
    <property type="interactions" value="25"/>
</dbReference>
<dbReference type="MINT" id="Q13007"/>
<dbReference type="STRING" id="9606.ENSP00000375795"/>
<dbReference type="GlyCosmos" id="Q13007">
    <property type="glycosylation" value="3 sites, No reported glycans"/>
</dbReference>
<dbReference type="GlyGen" id="Q13007">
    <property type="glycosylation" value="3 sites"/>
</dbReference>
<dbReference type="iPTMnet" id="Q13007"/>
<dbReference type="PhosphoSitePlus" id="Q13007"/>
<dbReference type="BioMuta" id="IL24"/>
<dbReference type="DMDM" id="2497340"/>
<dbReference type="MassIVE" id="Q13007"/>
<dbReference type="PaxDb" id="9606-ENSP00000375795"/>
<dbReference type="PeptideAtlas" id="Q13007"/>
<dbReference type="ProteomicsDB" id="59095">
    <molecule id="Q13007-1"/>
</dbReference>
<dbReference type="ProteomicsDB" id="59096">
    <molecule id="Q13007-2"/>
</dbReference>
<dbReference type="ProteomicsDB" id="59097">
    <molecule id="Q13007-3"/>
</dbReference>
<dbReference type="ABCD" id="Q13007">
    <property type="antibodies" value="31 sequenced antibodies"/>
</dbReference>
<dbReference type="Antibodypedia" id="1466">
    <property type="antibodies" value="492 antibodies from 30 providers"/>
</dbReference>
<dbReference type="DNASU" id="11009"/>
<dbReference type="Ensembl" id="ENST00000294984.7">
    <molecule id="Q13007-1"/>
    <property type="protein sequence ID" value="ENSP00000294984.2"/>
    <property type="gene ID" value="ENSG00000162892.16"/>
</dbReference>
<dbReference type="Ensembl" id="ENST00000367093.3">
    <molecule id="Q13007-3"/>
    <property type="protein sequence ID" value="ENSP00000356060.3"/>
    <property type="gene ID" value="ENSG00000162892.16"/>
</dbReference>
<dbReference type="Ensembl" id="ENST00000391929.7">
    <molecule id="Q13007-2"/>
    <property type="protein sequence ID" value="ENSP00000375795.3"/>
    <property type="gene ID" value="ENSG00000162892.16"/>
</dbReference>
<dbReference type="Ensembl" id="ENST00000611909.4">
    <molecule id="Q13007-4"/>
    <property type="protein sequence ID" value="ENSP00000484900.1"/>
    <property type="gene ID" value="ENSG00000162892.16"/>
</dbReference>
<dbReference type="GeneID" id="11009"/>
<dbReference type="KEGG" id="hsa:11009"/>
<dbReference type="MANE-Select" id="ENST00000294984.7">
    <property type="protein sequence ID" value="ENSP00000294984.2"/>
    <property type="RefSeq nucleotide sequence ID" value="NM_006850.3"/>
    <property type="RefSeq protein sequence ID" value="NP_006841.1"/>
</dbReference>
<dbReference type="UCSC" id="uc001hes.3">
    <molecule id="Q13007-1"/>
    <property type="organism name" value="human"/>
</dbReference>
<dbReference type="AGR" id="HGNC:11346"/>
<dbReference type="CTD" id="11009"/>
<dbReference type="DisGeNET" id="11009"/>
<dbReference type="GeneCards" id="IL24"/>
<dbReference type="HGNC" id="HGNC:11346">
    <property type="gene designation" value="IL24"/>
</dbReference>
<dbReference type="HPA" id="ENSG00000162892">
    <property type="expression patterns" value="Group enriched (intestine, lymphoid tissue, urinary bladder)"/>
</dbReference>
<dbReference type="MIM" id="604136">
    <property type="type" value="gene"/>
</dbReference>
<dbReference type="neXtProt" id="NX_Q13007"/>
<dbReference type="OpenTargets" id="ENSG00000162892"/>
<dbReference type="PharmGKB" id="PA29825"/>
<dbReference type="VEuPathDB" id="HostDB:ENSG00000162892"/>
<dbReference type="eggNOG" id="ENOG502SUXZ">
    <property type="taxonomic scope" value="Eukaryota"/>
</dbReference>
<dbReference type="GeneTree" id="ENSGT00950000183124"/>
<dbReference type="HOGENOM" id="CLU_098690_0_0_1"/>
<dbReference type="InParanoid" id="Q13007"/>
<dbReference type="OMA" id="WMGKFYR"/>
<dbReference type="OrthoDB" id="9938154at2759"/>
<dbReference type="PAN-GO" id="Q13007">
    <property type="GO annotations" value="0 GO annotations based on evolutionary models"/>
</dbReference>
<dbReference type="PhylomeDB" id="Q13007"/>
<dbReference type="TreeFam" id="TF333253"/>
<dbReference type="PathwayCommons" id="Q13007"/>
<dbReference type="Reactome" id="R-HSA-8854691">
    <property type="pathway name" value="Interleukin-20 family signaling"/>
</dbReference>
<dbReference type="SignaLink" id="Q13007"/>
<dbReference type="SIGNOR" id="Q13007"/>
<dbReference type="BioGRID-ORCS" id="11009">
    <property type="hits" value="14 hits in 1144 CRISPR screens"/>
</dbReference>
<dbReference type="GeneWiki" id="Interleukin_24"/>
<dbReference type="GenomeRNAi" id="11009"/>
<dbReference type="Pharos" id="Q13007">
    <property type="development level" value="Tbio"/>
</dbReference>
<dbReference type="PRO" id="PR:Q13007"/>
<dbReference type="Proteomes" id="UP000005640">
    <property type="component" value="Chromosome 1"/>
</dbReference>
<dbReference type="RNAct" id="Q13007">
    <property type="molecule type" value="protein"/>
</dbReference>
<dbReference type="Bgee" id="ENSG00000162892">
    <property type="expression patterns" value="Expressed in buccal mucosa cell and 91 other cell types or tissues"/>
</dbReference>
<dbReference type="ExpressionAtlas" id="Q13007">
    <property type="expression patterns" value="baseline and differential"/>
</dbReference>
<dbReference type="GO" id="GO:0005576">
    <property type="term" value="C:extracellular region"/>
    <property type="evidence" value="ECO:0000304"/>
    <property type="project" value="Reactome"/>
</dbReference>
<dbReference type="GO" id="GO:0005615">
    <property type="term" value="C:extracellular space"/>
    <property type="evidence" value="ECO:0000318"/>
    <property type="project" value="GO_Central"/>
</dbReference>
<dbReference type="GO" id="GO:0005125">
    <property type="term" value="F:cytokine activity"/>
    <property type="evidence" value="ECO:0000318"/>
    <property type="project" value="GO_Central"/>
</dbReference>
<dbReference type="GO" id="GO:0006915">
    <property type="term" value="P:apoptotic process"/>
    <property type="evidence" value="ECO:0000304"/>
    <property type="project" value="ProtInc"/>
</dbReference>
<dbReference type="GO" id="GO:0071353">
    <property type="term" value="P:cellular response to interleukin-4"/>
    <property type="evidence" value="ECO:0007669"/>
    <property type="project" value="Ensembl"/>
</dbReference>
<dbReference type="GO" id="GO:0071222">
    <property type="term" value="P:cellular response to lipopolysaccharide"/>
    <property type="evidence" value="ECO:0007669"/>
    <property type="project" value="Ensembl"/>
</dbReference>
<dbReference type="GO" id="GO:0006955">
    <property type="term" value="P:immune response"/>
    <property type="evidence" value="ECO:0000318"/>
    <property type="project" value="GO_Central"/>
</dbReference>
<dbReference type="GO" id="GO:0030336">
    <property type="term" value="P:negative regulation of cell migration"/>
    <property type="evidence" value="ECO:0007669"/>
    <property type="project" value="Ensembl"/>
</dbReference>
<dbReference type="GO" id="GO:0008285">
    <property type="term" value="P:negative regulation of cell population proliferation"/>
    <property type="evidence" value="ECO:0007669"/>
    <property type="project" value="Ensembl"/>
</dbReference>
<dbReference type="GO" id="GO:0008284">
    <property type="term" value="P:positive regulation of cell population proliferation"/>
    <property type="evidence" value="ECO:0007669"/>
    <property type="project" value="Ensembl"/>
</dbReference>
<dbReference type="FunFam" id="1.20.1250.10:FF:000038">
    <property type="entry name" value="Interleukin 24"/>
    <property type="match status" value="1"/>
</dbReference>
<dbReference type="Gene3D" id="1.20.1250.10">
    <property type="match status" value="1"/>
</dbReference>
<dbReference type="InterPro" id="IPR009079">
    <property type="entry name" value="4_helix_cytokine-like_core"/>
</dbReference>
<dbReference type="InterPro" id="IPR020443">
    <property type="entry name" value="IL-10/19/20/24/26"/>
</dbReference>
<dbReference type="InterPro" id="IPR020423">
    <property type="entry name" value="IL-10_CS"/>
</dbReference>
<dbReference type="InterPro" id="IPR020444">
    <property type="entry name" value="IL-24"/>
</dbReference>
<dbReference type="PANTHER" id="PTHR48482">
    <property type="entry name" value="INTERLEUKIN-19-RELATED"/>
    <property type="match status" value="1"/>
</dbReference>
<dbReference type="PANTHER" id="PTHR48482:SF4">
    <property type="entry name" value="INTERLEUKIN-24"/>
    <property type="match status" value="1"/>
</dbReference>
<dbReference type="PRINTS" id="PR01937">
    <property type="entry name" value="INTRLEUKIN24"/>
</dbReference>
<dbReference type="SUPFAM" id="SSF47266">
    <property type="entry name" value="4-helical cytokines"/>
    <property type="match status" value="1"/>
</dbReference>
<dbReference type="PROSITE" id="PS00520">
    <property type="entry name" value="INTERLEUKIN_10"/>
    <property type="match status" value="1"/>
</dbReference>
<proteinExistence type="evidence at protein level"/>
<reference key="1">
    <citation type="journal article" date="1995" name="Oncogene">
        <title>Subtraction hybridization identifies a novel melanoma differentiation associated gene, mda-7, modulated during human melanoma differentiation, growth and progression.</title>
        <authorList>
            <person name="Jiang H."/>
            <person name="Lin J.J."/>
            <person name="Su Z.-Z."/>
            <person name="Goldstein N.I."/>
            <person name="Fisher P.B."/>
        </authorList>
    </citation>
    <scope>NUCLEOTIDE SEQUENCE [MRNA] (ISOFORM 1)</scope>
    <source>
        <tissue>Melanoma</tissue>
    </source>
</reference>
<reference key="2">
    <citation type="submission" date="2000-06" db="EMBL/GenBank/DDBJ databases">
        <title>The human MDA-7 gene.</title>
        <authorList>
            <person name="Peat J."/>
            <person name="Kube D."/>
            <person name="Eskdale J."/>
            <person name="Jueliger S."/>
            <person name="Gallagher G."/>
        </authorList>
    </citation>
    <scope>NUCLEOTIDE SEQUENCE [GENOMIC DNA]</scope>
</reference>
<reference key="3">
    <citation type="journal article" date="2001" name="Oncogene">
        <title>Genomic structure, chromosomal localization and expression profile of a novel melanoma differentiation associated (mda-7) gene with cancer specific growth suppressing and apoptosis inducing properties.</title>
        <authorList>
            <person name="Huang E.Y."/>
            <person name="Madireddi M.T."/>
            <person name="Gopalkrishnan R.V."/>
            <person name="Leszczyniecka M."/>
            <person name="Su Z.-Z."/>
            <person name="Lebedeva I.V."/>
            <person name="Kang D."/>
            <person name="Jiang H."/>
            <person name="Lin J.J."/>
            <person name="Alexandre D."/>
            <person name="Chen Y."/>
            <person name="Vozhilla N."/>
            <person name="Mei M.X."/>
            <person name="Christiansen K.A."/>
            <person name="Sivo F."/>
            <person name="Goldstein N.I."/>
            <person name="Mhashilkar A.B."/>
            <person name="Chada S."/>
            <person name="Huberman E."/>
            <person name="Pestka S."/>
            <person name="Fisher P.B."/>
        </authorList>
    </citation>
    <scope>NUCLEOTIDE SEQUENCE [GENOMIC DNA]</scope>
    <scope>VARIANT HIS-124</scope>
    <source>
        <tissue>Fibroblast</tissue>
    </source>
</reference>
<reference key="4">
    <citation type="journal article" date="2004" name="J. Invest. Dermatol.">
        <title>Loss of novel mda-7 splice variant (mda-7s) expression is associated with metastatic melanoma.</title>
        <authorList>
            <person name="Allen M."/>
            <person name="Pratscher B."/>
            <person name="Roka F."/>
            <person name="Krepler C."/>
            <person name="Wacheck V."/>
            <person name="Schofer C."/>
            <person name="Pehamberger H."/>
            <person name="Muller M."/>
            <person name="Lucas T."/>
        </authorList>
    </citation>
    <scope>NUCLEOTIDE SEQUENCE [MRNA] (ISOFORM 4)</scope>
</reference>
<reference key="5">
    <citation type="submission" date="2001-11" db="EMBL/GenBank/DDBJ databases">
        <authorList>
            <consortium name="SeattleSNPs variation discovery resource"/>
        </authorList>
    </citation>
    <scope>NUCLEOTIDE SEQUENCE [GENOMIC DNA]</scope>
    <scope>VARIANTS HIS-124; ARG-125 AND LEU-131</scope>
</reference>
<reference key="6">
    <citation type="journal article" date="2005" name="Int. J. Immunogenet.">
        <title>Alternative splicing of IL-24 in melanocytes by deletion of exons 3 and 5.</title>
        <authorList>
            <person name="Allen M."/>
            <person name="Pratscher B."/>
            <person name="Krepler C."/>
            <person name="Frei K."/>
            <person name="Schofer C."/>
            <person name="Pehamberger H."/>
            <person name="Muller M."/>
            <person name="Lucas T."/>
        </authorList>
    </citation>
    <scope>NUCLEOTIDE SEQUENCE [MRNA] (ISOFORM 3)</scope>
    <scope>ALTERNATIVE SPLICING</scope>
</reference>
<reference key="7">
    <citation type="submission" date="2003-05" db="EMBL/GenBank/DDBJ databases">
        <title>Cloning of human full-length CDSs in BD Creator(TM) system donor vector.</title>
        <authorList>
            <person name="Kalnine N."/>
            <person name="Chen X."/>
            <person name="Rolfs A."/>
            <person name="Halleck A."/>
            <person name="Hines L."/>
            <person name="Eisenstein S."/>
            <person name="Koundinya M."/>
            <person name="Raphael J."/>
            <person name="Moreira D."/>
            <person name="Kelley T."/>
            <person name="LaBaer J."/>
            <person name="Lin Y."/>
            <person name="Phelan M."/>
            <person name="Farmer A."/>
        </authorList>
    </citation>
    <scope>NUCLEOTIDE SEQUENCE [LARGE SCALE MRNA] (ISOFORM 2)</scope>
</reference>
<reference key="8">
    <citation type="journal article" date="2006" name="Nature">
        <title>The DNA sequence and biological annotation of human chromosome 1.</title>
        <authorList>
            <person name="Gregory S.G."/>
            <person name="Barlow K.F."/>
            <person name="McLay K.E."/>
            <person name="Kaul R."/>
            <person name="Swarbreck D."/>
            <person name="Dunham A."/>
            <person name="Scott C.E."/>
            <person name="Howe K.L."/>
            <person name="Woodfine K."/>
            <person name="Spencer C.C.A."/>
            <person name="Jones M.C."/>
            <person name="Gillson C."/>
            <person name="Searle S."/>
            <person name="Zhou Y."/>
            <person name="Kokocinski F."/>
            <person name="McDonald L."/>
            <person name="Evans R."/>
            <person name="Phillips K."/>
            <person name="Atkinson A."/>
            <person name="Cooper R."/>
            <person name="Jones C."/>
            <person name="Hall R.E."/>
            <person name="Andrews T.D."/>
            <person name="Lloyd C."/>
            <person name="Ainscough R."/>
            <person name="Almeida J.P."/>
            <person name="Ambrose K.D."/>
            <person name="Anderson F."/>
            <person name="Andrew R.W."/>
            <person name="Ashwell R.I.S."/>
            <person name="Aubin K."/>
            <person name="Babbage A.K."/>
            <person name="Bagguley C.L."/>
            <person name="Bailey J."/>
            <person name="Beasley H."/>
            <person name="Bethel G."/>
            <person name="Bird C.P."/>
            <person name="Bray-Allen S."/>
            <person name="Brown J.Y."/>
            <person name="Brown A.J."/>
            <person name="Buckley D."/>
            <person name="Burton J."/>
            <person name="Bye J."/>
            <person name="Carder C."/>
            <person name="Chapman J.C."/>
            <person name="Clark S.Y."/>
            <person name="Clarke G."/>
            <person name="Clee C."/>
            <person name="Cobley V."/>
            <person name="Collier R.E."/>
            <person name="Corby N."/>
            <person name="Coville G.J."/>
            <person name="Davies J."/>
            <person name="Deadman R."/>
            <person name="Dunn M."/>
            <person name="Earthrowl M."/>
            <person name="Ellington A.G."/>
            <person name="Errington H."/>
            <person name="Frankish A."/>
            <person name="Frankland J."/>
            <person name="French L."/>
            <person name="Garner P."/>
            <person name="Garnett J."/>
            <person name="Gay L."/>
            <person name="Ghori M.R.J."/>
            <person name="Gibson R."/>
            <person name="Gilby L.M."/>
            <person name="Gillett W."/>
            <person name="Glithero R.J."/>
            <person name="Grafham D.V."/>
            <person name="Griffiths C."/>
            <person name="Griffiths-Jones S."/>
            <person name="Grocock R."/>
            <person name="Hammond S."/>
            <person name="Harrison E.S.I."/>
            <person name="Hart E."/>
            <person name="Haugen E."/>
            <person name="Heath P.D."/>
            <person name="Holmes S."/>
            <person name="Holt K."/>
            <person name="Howden P.J."/>
            <person name="Hunt A.R."/>
            <person name="Hunt S.E."/>
            <person name="Hunter G."/>
            <person name="Isherwood J."/>
            <person name="James R."/>
            <person name="Johnson C."/>
            <person name="Johnson D."/>
            <person name="Joy A."/>
            <person name="Kay M."/>
            <person name="Kershaw J.K."/>
            <person name="Kibukawa M."/>
            <person name="Kimberley A.M."/>
            <person name="King A."/>
            <person name="Knights A.J."/>
            <person name="Lad H."/>
            <person name="Laird G."/>
            <person name="Lawlor S."/>
            <person name="Leongamornlert D.A."/>
            <person name="Lloyd D.M."/>
            <person name="Loveland J."/>
            <person name="Lovell J."/>
            <person name="Lush M.J."/>
            <person name="Lyne R."/>
            <person name="Martin S."/>
            <person name="Mashreghi-Mohammadi M."/>
            <person name="Matthews L."/>
            <person name="Matthews N.S.W."/>
            <person name="McLaren S."/>
            <person name="Milne S."/>
            <person name="Mistry S."/>
            <person name="Moore M.J.F."/>
            <person name="Nickerson T."/>
            <person name="O'Dell C.N."/>
            <person name="Oliver K."/>
            <person name="Palmeiri A."/>
            <person name="Palmer S.A."/>
            <person name="Parker A."/>
            <person name="Patel D."/>
            <person name="Pearce A.V."/>
            <person name="Peck A.I."/>
            <person name="Pelan S."/>
            <person name="Phelps K."/>
            <person name="Phillimore B.J."/>
            <person name="Plumb R."/>
            <person name="Rajan J."/>
            <person name="Raymond C."/>
            <person name="Rouse G."/>
            <person name="Saenphimmachak C."/>
            <person name="Sehra H.K."/>
            <person name="Sheridan E."/>
            <person name="Shownkeen R."/>
            <person name="Sims S."/>
            <person name="Skuce C.D."/>
            <person name="Smith M."/>
            <person name="Steward C."/>
            <person name="Subramanian S."/>
            <person name="Sycamore N."/>
            <person name="Tracey A."/>
            <person name="Tromans A."/>
            <person name="Van Helmond Z."/>
            <person name="Wall M."/>
            <person name="Wallis J.M."/>
            <person name="White S."/>
            <person name="Whitehead S.L."/>
            <person name="Wilkinson J.E."/>
            <person name="Willey D.L."/>
            <person name="Williams H."/>
            <person name="Wilming L."/>
            <person name="Wray P.W."/>
            <person name="Wu Z."/>
            <person name="Coulson A."/>
            <person name="Vaudin M."/>
            <person name="Sulston J.E."/>
            <person name="Durbin R.M."/>
            <person name="Hubbard T."/>
            <person name="Wooster R."/>
            <person name="Dunham I."/>
            <person name="Carter N.P."/>
            <person name="McVean G."/>
            <person name="Ross M.T."/>
            <person name="Harrow J."/>
            <person name="Olson M.V."/>
            <person name="Beck S."/>
            <person name="Rogers J."/>
            <person name="Bentley D.R."/>
        </authorList>
    </citation>
    <scope>NUCLEOTIDE SEQUENCE [LARGE SCALE GENOMIC DNA]</scope>
</reference>
<reference key="9">
    <citation type="journal article" date="2004" name="Genome Res.">
        <title>The status, quality, and expansion of the NIH full-length cDNA project: the Mammalian Gene Collection (MGC).</title>
        <authorList>
            <consortium name="The MGC Project Team"/>
        </authorList>
    </citation>
    <scope>NUCLEOTIDE SEQUENCE [LARGE SCALE MRNA] (ISOFORM 2)</scope>
    <source>
        <tissue>Lung</tissue>
    </source>
</reference>
<reference key="10">
    <citation type="journal article" date="2004" name="Protein Sci.">
        <title>Signal peptide prediction based on analysis of experimentally verified cleavage sites.</title>
        <authorList>
            <person name="Zhang Z."/>
            <person name="Henzel W.J."/>
        </authorList>
    </citation>
    <scope>PROTEIN SEQUENCE OF 52-66</scope>
</reference>
<reference key="11">
    <citation type="journal article" date="1998" name="Proc. Natl. Acad. Sci. U.S.A.">
        <title>The cancer growth suppressor gene mda-7 selectively induces apoptosis in human breast cancer cells and inhibits tumor growth in nude mice.</title>
        <authorList>
            <person name="Su Z.-Z."/>
            <person name="Madireddi M.T."/>
            <person name="Lin J.J."/>
            <person name="Young C.S.H."/>
            <person name="Kitada S."/>
            <person name="Reed J.C."/>
            <person name="Goldstein N.I."/>
            <person name="Fisher P.B."/>
        </authorList>
    </citation>
    <scope>CHARACTERIZATION</scope>
</reference>
<reference key="12">
    <citation type="journal article" date="2002" name="J. Biol. Chem.">
        <title>Interleukin 24 (MDA-7/MOB-5) signals through two heterodimeric receptors, IL-22R1/IL-20R2 and IL-20R1/IL-20R2.</title>
        <authorList>
            <person name="Wang M."/>
            <person name="Tan Z."/>
            <person name="Zhang R."/>
            <person name="Kotenko S.V."/>
            <person name="Liang P."/>
        </authorList>
    </citation>
    <scope>FUNCTION</scope>
    <scope>GLYCOSYLATION</scope>
    <scope>SUBCELLULAR LOCATION</scope>
</reference>
<reference key="13">
    <citation type="journal article" date="2012" name="J. Interferon Cytokine Res.">
        <title>Critical role of lysine 123 in the ubiquitin-mediated degradation of MDA-7/IL-24.</title>
        <authorList>
            <person name="Tian H."/>
            <person name="Li L."/>
            <person name="Zhang B."/>
            <person name="Di J."/>
            <person name="Chen F."/>
            <person name="Li H."/>
            <person name="Liu J."/>
            <person name="Pei D."/>
            <person name="Zheng J."/>
        </authorList>
    </citation>
    <scope>UBIQUITINATION AT LYS-122</scope>
</reference>
<reference key="14">
    <citation type="journal article" date="2014" name="Toxicol. Appl. Pharmacol.">
        <title>Keratinocyte-derived IL-24 plays a role in the positive feedback regulation of epidermal inflammation in response to environmental and endogenous toxic stressors.</title>
        <authorList>
            <person name="Jin S.H."/>
            <person name="Choi D."/>
            <person name="Chun Y.J."/>
            <person name="Noh M."/>
        </authorList>
    </citation>
    <scope>FUNCTION</scope>
</reference>
<reference key="15">
    <citation type="journal article" date="2016" name="J. Microbiol.">
        <title>MDA7/IL-24 is an anti-viral factor that inhibits influenza virus replication.</title>
        <authorList>
            <person name="Seong R.K."/>
            <person name="Choi Y.K."/>
            <person name="Shin O.S."/>
        </authorList>
    </citation>
    <scope>FUNCTION</scope>
    <scope>INDUCTION BY INFLUENZA VIRUS</scope>
</reference>
<reference evidence="16" key="16">
    <citation type="journal article" date="2018" name="J. Immunol.">
        <title>Crystal Structure of the Labile Complex of IL-24 with the Extracellular Domains of IL-22R1 and IL-20R2.</title>
        <authorList>
            <person name="Lubkowski J."/>
            <person name="Sonmez C."/>
            <person name="Smirnov S.V."/>
            <person name="Anishkin A."/>
            <person name="Kotenko S.V."/>
            <person name="Wlodawer A."/>
        </authorList>
    </citation>
    <scope>X-RAY CRYSTALLOGRAPHY (2.15 ANGSTROMS) OF 52-206</scope>
    <scope>FUNCTION</scope>
    <scope>DISULFIDE BOND</scope>
</reference>
<accession>Q13007</accession>
<accession>Q2YHE5</accession>
<accession>Q53XZ7</accession>
<accession>Q5YLN8</accession>
<accession>Q96DB0</accession>
<accession>Q96KG4</accession>
<organism>
    <name type="scientific">Homo sapiens</name>
    <name type="common">Human</name>
    <dbReference type="NCBI Taxonomy" id="9606"/>
    <lineage>
        <taxon>Eukaryota</taxon>
        <taxon>Metazoa</taxon>
        <taxon>Chordata</taxon>
        <taxon>Craniata</taxon>
        <taxon>Vertebrata</taxon>
        <taxon>Euteleostomi</taxon>
        <taxon>Mammalia</taxon>
        <taxon>Eutheria</taxon>
        <taxon>Euarchontoglires</taxon>
        <taxon>Primates</taxon>
        <taxon>Haplorrhini</taxon>
        <taxon>Catarrhini</taxon>
        <taxon>Hominidae</taxon>
        <taxon>Homo</taxon>
    </lineage>
</organism>
<name>IL24_HUMAN</name>
<comment type="function">
    <text evidence="1 4 7 8 9">Multifunctional cytokine mainly produced by T-cells that plays a regulatory role in immune response, tissue homeostasis, host defense, and oncogenesis (PubMed:25168428, PubMed:27687232). Possesses antiviral functions and induces the type I interferon response during influenza infection (PubMed:27687232). Signals through two receptor complexes IL20RA/IL20RB or IL20RB/IL22RA1 (PubMed:11706020, PubMed:30111632). In turn, stimulates the JAK1-STAT3 and MAPK pathways and promotes the secretion of pro-inflammatory mediators including IL8 and MMP1 (PubMed:25168428). Intracellularly, maintains endoplasmic reticulum homeostasis by restricting the eIF2alpha-CHOP pathway-mediated stress signal (By similarity). In addition, acts as a quality control mechanism for the ubiquitin proteasome system by alerting the cell to proteasome dysfunction through activation of PKR/EIF2AK2 (By similarity).</text>
</comment>
<comment type="interaction">
    <interactant intactId="EBI-3915542">
        <id>Q13007</id>
    </interactant>
    <interactant intactId="EBI-495465">
        <id>Q13315</id>
        <label>ATM</label>
    </interactant>
    <organismsDiffer>false</organismsDiffer>
    <experiments>2</experiments>
</comment>
<comment type="interaction">
    <interactant intactId="EBI-3915542">
        <id>Q13007</id>
    </interactant>
    <interactant intactId="EBI-1180783">
        <id>O96017</id>
        <label>CHEK2</label>
    </interactant>
    <organismsDiffer>false</organismsDiffer>
    <experiments>3</experiments>
</comment>
<comment type="interaction">
    <interactant intactId="EBI-3915542">
        <id>Q13007</id>
    </interactant>
    <interactant intactId="EBI-355676">
        <id>P09874</id>
        <label>PARP1</label>
    </interactant>
    <organismsDiffer>false</organismsDiffer>
    <experiments>2</experiments>
</comment>
<comment type="interaction">
    <interactant intactId="EBI-3915542">
        <id>Q13007</id>
    </interactant>
    <interactant intactId="EBI-297202">
        <id>Q06609</id>
        <label>RAD51</label>
    </interactant>
    <organismsDiffer>false</organismsDiffer>
    <experiments>2</experiments>
</comment>
<comment type="subcellular location">
    <subcellularLocation>
        <location evidence="4">Secreted</location>
    </subcellularLocation>
</comment>
<comment type="alternative products">
    <event type="alternative splicing"/>
    <isoform>
        <id>Q13007-1</id>
        <name>1</name>
        <sequence type="displayed"/>
    </isoform>
    <isoform>
        <id>Q13007-2</id>
        <name>2</name>
        <sequence type="described" ref="VSP_042673"/>
    </isoform>
    <isoform>
        <id>Q13007-3</id>
        <name>3</name>
        <sequence type="described" ref="VSP_042673 VSP_042674"/>
    </isoform>
    <isoform>
        <id>Q13007-4</id>
        <name>4</name>
        <name>mda-7s</name>
        <sequence type="described" ref="VSP_043915"/>
    </isoform>
</comment>
<comment type="tissue specificity">
    <text>Up-regulated in melanoma cells induced to terminally differentiate.</text>
</comment>
<comment type="induction">
    <text evidence="8">Upon influenza virus infection.</text>
</comment>
<comment type="PTM">
    <text evidence="4">Glycosylated.</text>
</comment>
<comment type="PTM">
    <text evidence="6">Ubiquitination at Lys-122 promotes proteasomal degradation.</text>
</comment>
<comment type="similarity">
    <text evidence="15">Belongs to the IL-10 family.</text>
</comment>
<comment type="online information" name="Wikipedia">
    <link uri="https://en.wikipedia.org/wiki/Interleukin_24"/>
    <text>Interleukin-24 entry</text>
</comment>
<gene>
    <name type="primary">IL24</name>
    <name type="synonym">MDA7</name>
    <name type="synonym">ST16</name>
</gene>